<sequence length="349" mass="37214">MDIKNALSRIVGQLDLTTEEMREVMRQIMTGQCSEAQIGAFLMGMRMKSESIDEIVGAVSVMRELAEKVELQSLDGVVDIVGTGGDGANIFNVSTASSFVLAAAGCPVAKHGNRAVSGKSGSADLLEAAGIYLNLTPTQVARCIDSLGIGFMFAQSHHSAMKHAAGPRRELGLRTLFNMLGPLTNPAGVKHQVVGVFAQTLCRPLAEVLQRLGSKHVLVVHSKDGLDEFSLAAPTFVAELKNGEITEYWVEPEDLGMKSQSLHGLAVESPQASLELIRDALGRRKTENGQKAAEMIVLNAGAALYAADHAMSLKAGVELAHDVLHTGLAWEKLQELGAFTAVFKVENEA</sequence>
<evidence type="ECO:0000255" key="1">
    <source>
        <dbReference type="HAMAP-Rule" id="MF_00211"/>
    </source>
</evidence>
<dbReference type="EC" id="2.4.2.18" evidence="1"/>
<dbReference type="EMBL" id="CP000712">
    <property type="protein sequence ID" value="ABQ76624.1"/>
    <property type="molecule type" value="Genomic_DNA"/>
</dbReference>
<dbReference type="SMR" id="A5VXL4"/>
<dbReference type="KEGG" id="ppf:Pput_0454"/>
<dbReference type="eggNOG" id="COG0547">
    <property type="taxonomic scope" value="Bacteria"/>
</dbReference>
<dbReference type="HOGENOM" id="CLU_034315_2_1_6"/>
<dbReference type="UniPathway" id="UPA00035">
    <property type="reaction ID" value="UER00041"/>
</dbReference>
<dbReference type="GO" id="GO:0005829">
    <property type="term" value="C:cytosol"/>
    <property type="evidence" value="ECO:0007669"/>
    <property type="project" value="TreeGrafter"/>
</dbReference>
<dbReference type="GO" id="GO:0004048">
    <property type="term" value="F:anthranilate phosphoribosyltransferase activity"/>
    <property type="evidence" value="ECO:0007669"/>
    <property type="project" value="UniProtKB-UniRule"/>
</dbReference>
<dbReference type="GO" id="GO:0000287">
    <property type="term" value="F:magnesium ion binding"/>
    <property type="evidence" value="ECO:0007669"/>
    <property type="project" value="UniProtKB-UniRule"/>
</dbReference>
<dbReference type="GO" id="GO:0000162">
    <property type="term" value="P:L-tryptophan biosynthetic process"/>
    <property type="evidence" value="ECO:0007669"/>
    <property type="project" value="UniProtKB-UniRule"/>
</dbReference>
<dbReference type="FunFam" id="1.20.970.10:FF:000006">
    <property type="entry name" value="Anthranilate phosphoribosyltransferase"/>
    <property type="match status" value="1"/>
</dbReference>
<dbReference type="FunFam" id="3.40.1030.10:FF:000002">
    <property type="entry name" value="Anthranilate phosphoribosyltransferase"/>
    <property type="match status" value="1"/>
</dbReference>
<dbReference type="Gene3D" id="3.40.1030.10">
    <property type="entry name" value="Nucleoside phosphorylase/phosphoribosyltransferase catalytic domain"/>
    <property type="match status" value="1"/>
</dbReference>
<dbReference type="Gene3D" id="1.20.970.10">
    <property type="entry name" value="Transferase, Pyrimidine Nucleoside Phosphorylase, Chain C"/>
    <property type="match status" value="1"/>
</dbReference>
<dbReference type="HAMAP" id="MF_00211">
    <property type="entry name" value="TrpD"/>
    <property type="match status" value="1"/>
</dbReference>
<dbReference type="InterPro" id="IPR005940">
    <property type="entry name" value="Anthranilate_Pribosyl_Tfrase"/>
</dbReference>
<dbReference type="InterPro" id="IPR000312">
    <property type="entry name" value="Glycosyl_Trfase_fam3"/>
</dbReference>
<dbReference type="InterPro" id="IPR017459">
    <property type="entry name" value="Glycosyl_Trfase_fam3_N_dom"/>
</dbReference>
<dbReference type="InterPro" id="IPR036320">
    <property type="entry name" value="Glycosyl_Trfase_fam3_N_dom_sf"/>
</dbReference>
<dbReference type="InterPro" id="IPR035902">
    <property type="entry name" value="Nuc_phospho_transferase"/>
</dbReference>
<dbReference type="NCBIfam" id="TIGR01245">
    <property type="entry name" value="trpD"/>
    <property type="match status" value="1"/>
</dbReference>
<dbReference type="PANTHER" id="PTHR43285">
    <property type="entry name" value="ANTHRANILATE PHOSPHORIBOSYLTRANSFERASE"/>
    <property type="match status" value="1"/>
</dbReference>
<dbReference type="PANTHER" id="PTHR43285:SF2">
    <property type="entry name" value="ANTHRANILATE PHOSPHORIBOSYLTRANSFERASE"/>
    <property type="match status" value="1"/>
</dbReference>
<dbReference type="Pfam" id="PF02885">
    <property type="entry name" value="Glycos_trans_3N"/>
    <property type="match status" value="1"/>
</dbReference>
<dbReference type="Pfam" id="PF00591">
    <property type="entry name" value="Glycos_transf_3"/>
    <property type="match status" value="1"/>
</dbReference>
<dbReference type="SUPFAM" id="SSF52418">
    <property type="entry name" value="Nucleoside phosphorylase/phosphoribosyltransferase catalytic domain"/>
    <property type="match status" value="1"/>
</dbReference>
<dbReference type="SUPFAM" id="SSF47648">
    <property type="entry name" value="Nucleoside phosphorylase/phosphoribosyltransferase N-terminal domain"/>
    <property type="match status" value="1"/>
</dbReference>
<feature type="chain" id="PRO_1000043051" description="Anthranilate phosphoribosyltransferase">
    <location>
        <begin position="1"/>
        <end position="349"/>
    </location>
</feature>
<feature type="binding site" evidence="1">
    <location>
        <position position="82"/>
    </location>
    <ligand>
        <name>5-phospho-alpha-D-ribose 1-diphosphate</name>
        <dbReference type="ChEBI" id="CHEBI:58017"/>
    </ligand>
</feature>
<feature type="binding site" evidence="1">
    <location>
        <position position="82"/>
    </location>
    <ligand>
        <name>anthranilate</name>
        <dbReference type="ChEBI" id="CHEBI:16567"/>
        <label>1</label>
    </ligand>
</feature>
<feature type="binding site" evidence="1">
    <location>
        <begin position="85"/>
        <end position="86"/>
    </location>
    <ligand>
        <name>5-phospho-alpha-D-ribose 1-diphosphate</name>
        <dbReference type="ChEBI" id="CHEBI:58017"/>
    </ligand>
</feature>
<feature type="binding site" evidence="1">
    <location>
        <begin position="92"/>
        <end position="95"/>
    </location>
    <ligand>
        <name>5-phospho-alpha-D-ribose 1-diphosphate</name>
        <dbReference type="ChEBI" id="CHEBI:58017"/>
    </ligand>
</feature>
<feature type="binding site" evidence="1">
    <location>
        <position position="94"/>
    </location>
    <ligand>
        <name>Mg(2+)</name>
        <dbReference type="ChEBI" id="CHEBI:18420"/>
        <label>1</label>
    </ligand>
</feature>
<feature type="binding site" evidence="1">
    <location>
        <begin position="110"/>
        <end position="118"/>
    </location>
    <ligand>
        <name>5-phospho-alpha-D-ribose 1-diphosphate</name>
        <dbReference type="ChEBI" id="CHEBI:58017"/>
    </ligand>
</feature>
<feature type="binding site" evidence="1">
    <location>
        <position position="113"/>
    </location>
    <ligand>
        <name>anthranilate</name>
        <dbReference type="ChEBI" id="CHEBI:16567"/>
        <label>1</label>
    </ligand>
</feature>
<feature type="binding site" evidence="1">
    <location>
        <position position="122"/>
    </location>
    <ligand>
        <name>5-phospho-alpha-D-ribose 1-diphosphate</name>
        <dbReference type="ChEBI" id="CHEBI:58017"/>
    </ligand>
</feature>
<feature type="binding site" evidence="1">
    <location>
        <position position="168"/>
    </location>
    <ligand>
        <name>anthranilate</name>
        <dbReference type="ChEBI" id="CHEBI:16567"/>
        <label>2</label>
    </ligand>
</feature>
<feature type="binding site" evidence="1">
    <location>
        <position position="227"/>
    </location>
    <ligand>
        <name>Mg(2+)</name>
        <dbReference type="ChEBI" id="CHEBI:18420"/>
        <label>2</label>
    </ligand>
</feature>
<feature type="binding site" evidence="1">
    <location>
        <position position="228"/>
    </location>
    <ligand>
        <name>Mg(2+)</name>
        <dbReference type="ChEBI" id="CHEBI:18420"/>
        <label>1</label>
    </ligand>
</feature>
<feature type="binding site" evidence="1">
    <location>
        <position position="228"/>
    </location>
    <ligand>
        <name>Mg(2+)</name>
        <dbReference type="ChEBI" id="CHEBI:18420"/>
        <label>2</label>
    </ligand>
</feature>
<proteinExistence type="inferred from homology"/>
<accession>A5VXL4</accession>
<name>TRPD_PSEP1</name>
<gene>
    <name evidence="1" type="primary">trpD</name>
    <name type="ordered locus">Pput_0454</name>
</gene>
<keyword id="KW-0028">Amino-acid biosynthesis</keyword>
<keyword id="KW-0057">Aromatic amino acid biosynthesis</keyword>
<keyword id="KW-0328">Glycosyltransferase</keyword>
<keyword id="KW-0460">Magnesium</keyword>
<keyword id="KW-0479">Metal-binding</keyword>
<keyword id="KW-0808">Transferase</keyword>
<keyword id="KW-0822">Tryptophan biosynthesis</keyword>
<reference key="1">
    <citation type="submission" date="2007-05" db="EMBL/GenBank/DDBJ databases">
        <title>Complete sequence of Pseudomonas putida F1.</title>
        <authorList>
            <consortium name="US DOE Joint Genome Institute"/>
            <person name="Copeland A."/>
            <person name="Lucas S."/>
            <person name="Lapidus A."/>
            <person name="Barry K."/>
            <person name="Detter J.C."/>
            <person name="Glavina del Rio T."/>
            <person name="Hammon N."/>
            <person name="Israni S."/>
            <person name="Dalin E."/>
            <person name="Tice H."/>
            <person name="Pitluck S."/>
            <person name="Chain P."/>
            <person name="Malfatti S."/>
            <person name="Shin M."/>
            <person name="Vergez L."/>
            <person name="Schmutz J."/>
            <person name="Larimer F."/>
            <person name="Land M."/>
            <person name="Hauser L."/>
            <person name="Kyrpides N."/>
            <person name="Lykidis A."/>
            <person name="Parales R."/>
            <person name="Richardson P."/>
        </authorList>
    </citation>
    <scope>NUCLEOTIDE SEQUENCE [LARGE SCALE GENOMIC DNA]</scope>
    <source>
        <strain>ATCC 700007 / DSM 6899 / JCM 31910 / BCRC 17059 / LMG 24140 / F1</strain>
    </source>
</reference>
<comment type="function">
    <text evidence="1">Catalyzes the transfer of the phosphoribosyl group of 5-phosphorylribose-1-pyrophosphate (PRPP) to anthranilate to yield N-(5'-phosphoribosyl)-anthranilate (PRA).</text>
</comment>
<comment type="catalytic activity">
    <reaction evidence="1">
        <text>N-(5-phospho-beta-D-ribosyl)anthranilate + diphosphate = 5-phospho-alpha-D-ribose 1-diphosphate + anthranilate</text>
        <dbReference type="Rhea" id="RHEA:11768"/>
        <dbReference type="ChEBI" id="CHEBI:16567"/>
        <dbReference type="ChEBI" id="CHEBI:18277"/>
        <dbReference type="ChEBI" id="CHEBI:33019"/>
        <dbReference type="ChEBI" id="CHEBI:58017"/>
        <dbReference type="EC" id="2.4.2.18"/>
    </reaction>
</comment>
<comment type="cofactor">
    <cofactor evidence="1">
        <name>Mg(2+)</name>
        <dbReference type="ChEBI" id="CHEBI:18420"/>
    </cofactor>
    <text evidence="1">Binds 2 magnesium ions per monomer.</text>
</comment>
<comment type="pathway">
    <text evidence="1">Amino-acid biosynthesis; L-tryptophan biosynthesis; L-tryptophan from chorismate: step 2/5.</text>
</comment>
<comment type="subunit">
    <text evidence="1">Homodimer.</text>
</comment>
<comment type="similarity">
    <text evidence="1">Belongs to the anthranilate phosphoribosyltransferase family.</text>
</comment>
<organism>
    <name type="scientific">Pseudomonas putida (strain ATCC 700007 / DSM 6899 / JCM 31910 / BCRC 17059 / LMG 24140 / F1)</name>
    <dbReference type="NCBI Taxonomy" id="351746"/>
    <lineage>
        <taxon>Bacteria</taxon>
        <taxon>Pseudomonadati</taxon>
        <taxon>Pseudomonadota</taxon>
        <taxon>Gammaproteobacteria</taxon>
        <taxon>Pseudomonadales</taxon>
        <taxon>Pseudomonadaceae</taxon>
        <taxon>Pseudomonas</taxon>
    </lineage>
</organism>
<protein>
    <recommendedName>
        <fullName evidence="1">Anthranilate phosphoribosyltransferase</fullName>
        <ecNumber evidence="1">2.4.2.18</ecNumber>
    </recommendedName>
</protein>